<evidence type="ECO:0000255" key="1">
    <source>
        <dbReference type="HAMAP-Rule" id="MF_00259"/>
    </source>
</evidence>
<dbReference type="EC" id="2.1.2.10" evidence="1"/>
<dbReference type="EMBL" id="CP001097">
    <property type="protein sequence ID" value="ACD89510.1"/>
    <property type="molecule type" value="Genomic_DNA"/>
</dbReference>
<dbReference type="RefSeq" id="WP_012465391.1">
    <property type="nucleotide sequence ID" value="NC_010803.1"/>
</dbReference>
<dbReference type="SMR" id="B3EFX7"/>
<dbReference type="STRING" id="290315.Clim_0417"/>
<dbReference type="KEGG" id="cli:Clim_0417"/>
<dbReference type="eggNOG" id="COG0404">
    <property type="taxonomic scope" value="Bacteria"/>
</dbReference>
<dbReference type="HOGENOM" id="CLU_007884_10_2_10"/>
<dbReference type="OrthoDB" id="9774591at2"/>
<dbReference type="Proteomes" id="UP000008841">
    <property type="component" value="Chromosome"/>
</dbReference>
<dbReference type="GO" id="GO:0005960">
    <property type="term" value="C:glycine cleavage complex"/>
    <property type="evidence" value="ECO:0007669"/>
    <property type="project" value="InterPro"/>
</dbReference>
<dbReference type="GO" id="GO:0004047">
    <property type="term" value="F:aminomethyltransferase activity"/>
    <property type="evidence" value="ECO:0007669"/>
    <property type="project" value="UniProtKB-UniRule"/>
</dbReference>
<dbReference type="GO" id="GO:0008483">
    <property type="term" value="F:transaminase activity"/>
    <property type="evidence" value="ECO:0007669"/>
    <property type="project" value="UniProtKB-KW"/>
</dbReference>
<dbReference type="GO" id="GO:0019464">
    <property type="term" value="P:glycine decarboxylation via glycine cleavage system"/>
    <property type="evidence" value="ECO:0007669"/>
    <property type="project" value="UniProtKB-UniRule"/>
</dbReference>
<dbReference type="FunFam" id="3.30.70.1400:FF:000001">
    <property type="entry name" value="Aminomethyltransferase"/>
    <property type="match status" value="1"/>
</dbReference>
<dbReference type="Gene3D" id="2.40.30.110">
    <property type="entry name" value="Aminomethyltransferase beta-barrel domains"/>
    <property type="match status" value="1"/>
</dbReference>
<dbReference type="Gene3D" id="3.30.70.1400">
    <property type="entry name" value="Aminomethyltransferase beta-barrel domains"/>
    <property type="match status" value="1"/>
</dbReference>
<dbReference type="Gene3D" id="4.10.1250.10">
    <property type="entry name" value="Aminomethyltransferase fragment"/>
    <property type="match status" value="1"/>
</dbReference>
<dbReference type="Gene3D" id="3.30.1360.120">
    <property type="entry name" value="Probable tRNA modification gtpase trme, domain 1"/>
    <property type="match status" value="1"/>
</dbReference>
<dbReference type="HAMAP" id="MF_00259">
    <property type="entry name" value="GcvT"/>
    <property type="match status" value="1"/>
</dbReference>
<dbReference type="InterPro" id="IPR006223">
    <property type="entry name" value="GCS_T"/>
</dbReference>
<dbReference type="InterPro" id="IPR022903">
    <property type="entry name" value="GCS_T_bac"/>
</dbReference>
<dbReference type="InterPro" id="IPR013977">
    <property type="entry name" value="GCST_C"/>
</dbReference>
<dbReference type="InterPro" id="IPR006222">
    <property type="entry name" value="GCV_T_N"/>
</dbReference>
<dbReference type="InterPro" id="IPR028896">
    <property type="entry name" value="GcvT/YgfZ/DmdA"/>
</dbReference>
<dbReference type="InterPro" id="IPR029043">
    <property type="entry name" value="GcvT/YgfZ_C"/>
</dbReference>
<dbReference type="InterPro" id="IPR027266">
    <property type="entry name" value="TrmE/GcvT_dom1"/>
</dbReference>
<dbReference type="NCBIfam" id="TIGR00528">
    <property type="entry name" value="gcvT"/>
    <property type="match status" value="1"/>
</dbReference>
<dbReference type="NCBIfam" id="NF001567">
    <property type="entry name" value="PRK00389.1"/>
    <property type="match status" value="1"/>
</dbReference>
<dbReference type="PANTHER" id="PTHR43757">
    <property type="entry name" value="AMINOMETHYLTRANSFERASE"/>
    <property type="match status" value="1"/>
</dbReference>
<dbReference type="PANTHER" id="PTHR43757:SF2">
    <property type="entry name" value="AMINOMETHYLTRANSFERASE, MITOCHONDRIAL"/>
    <property type="match status" value="1"/>
</dbReference>
<dbReference type="Pfam" id="PF01571">
    <property type="entry name" value="GCV_T"/>
    <property type="match status" value="1"/>
</dbReference>
<dbReference type="Pfam" id="PF08669">
    <property type="entry name" value="GCV_T_C"/>
    <property type="match status" value="1"/>
</dbReference>
<dbReference type="PIRSF" id="PIRSF006487">
    <property type="entry name" value="GcvT"/>
    <property type="match status" value="1"/>
</dbReference>
<dbReference type="SUPFAM" id="SSF101790">
    <property type="entry name" value="Aminomethyltransferase beta-barrel domain"/>
    <property type="match status" value="1"/>
</dbReference>
<dbReference type="SUPFAM" id="SSF103025">
    <property type="entry name" value="Folate-binding domain"/>
    <property type="match status" value="1"/>
</dbReference>
<sequence length="362" mass="40473">MKKTALYSWHEQAGAKIIDFGGYLMPVQYSGIIAEHKAVREAAGLFDVSHMGNFYVRGVRAGEFLQYLTTNDLSKVSDGEAQYNLMLYTDGGVVDDLIIYRIDAETYFLIVNASNAQKDYAWIQKHIGAFEGVSLEDRTDELSLVALQGPMSGAILRKVFPDEDCNTLASFRFRKVYYNGTELLIARTGYTGEQGVEICLPNEAALELWSVLMKAGEEYGIQPIGLGARDTLRLEMGYSLYGHEIDSTVNPLEARLKWVVKMEKGPFIGKEACRQVELNPRYAVAGFSLDGRALPRQHFRLYNSDRQEIGTVCSGTLSPTLQEPIGTCSILREYSRPGTHVMVEIRGTMHQGVIRALPFVQR</sequence>
<feature type="chain" id="PRO_1000114086" description="Aminomethyltransferase">
    <location>
        <begin position="1"/>
        <end position="362"/>
    </location>
</feature>
<comment type="function">
    <text evidence="1">The glycine cleavage system catalyzes the degradation of glycine.</text>
</comment>
<comment type="catalytic activity">
    <reaction evidence="1">
        <text>N(6)-[(R)-S(8)-aminomethyldihydrolipoyl]-L-lysyl-[protein] + (6S)-5,6,7,8-tetrahydrofolate = N(6)-[(R)-dihydrolipoyl]-L-lysyl-[protein] + (6R)-5,10-methylene-5,6,7,8-tetrahydrofolate + NH4(+)</text>
        <dbReference type="Rhea" id="RHEA:16945"/>
        <dbReference type="Rhea" id="RHEA-COMP:10475"/>
        <dbReference type="Rhea" id="RHEA-COMP:10492"/>
        <dbReference type="ChEBI" id="CHEBI:15636"/>
        <dbReference type="ChEBI" id="CHEBI:28938"/>
        <dbReference type="ChEBI" id="CHEBI:57453"/>
        <dbReference type="ChEBI" id="CHEBI:83100"/>
        <dbReference type="ChEBI" id="CHEBI:83143"/>
        <dbReference type="EC" id="2.1.2.10"/>
    </reaction>
</comment>
<comment type="subunit">
    <text evidence="1">The glycine cleavage system is composed of four proteins: P, T, L and H.</text>
</comment>
<comment type="similarity">
    <text evidence="1">Belongs to the GcvT family.</text>
</comment>
<name>GCST_CHLL2</name>
<proteinExistence type="inferred from homology"/>
<keyword id="KW-0032">Aminotransferase</keyword>
<keyword id="KW-0808">Transferase</keyword>
<accession>B3EFX7</accession>
<organism>
    <name type="scientific">Chlorobium limicola (strain DSM 245 / NBRC 103803 / 6330)</name>
    <dbReference type="NCBI Taxonomy" id="290315"/>
    <lineage>
        <taxon>Bacteria</taxon>
        <taxon>Pseudomonadati</taxon>
        <taxon>Chlorobiota</taxon>
        <taxon>Chlorobiia</taxon>
        <taxon>Chlorobiales</taxon>
        <taxon>Chlorobiaceae</taxon>
        <taxon>Chlorobium/Pelodictyon group</taxon>
        <taxon>Chlorobium</taxon>
    </lineage>
</organism>
<gene>
    <name evidence="1" type="primary">gcvT</name>
    <name type="ordered locus">Clim_0417</name>
</gene>
<protein>
    <recommendedName>
        <fullName evidence="1">Aminomethyltransferase</fullName>
        <ecNumber evidence="1">2.1.2.10</ecNumber>
    </recommendedName>
    <alternativeName>
        <fullName evidence="1">Glycine cleavage system T protein</fullName>
    </alternativeName>
</protein>
<reference key="1">
    <citation type="submission" date="2008-05" db="EMBL/GenBank/DDBJ databases">
        <title>Complete sequence of Chlorobium limicola DSM 245.</title>
        <authorList>
            <consortium name="US DOE Joint Genome Institute"/>
            <person name="Lucas S."/>
            <person name="Copeland A."/>
            <person name="Lapidus A."/>
            <person name="Glavina del Rio T."/>
            <person name="Dalin E."/>
            <person name="Tice H."/>
            <person name="Bruce D."/>
            <person name="Goodwin L."/>
            <person name="Pitluck S."/>
            <person name="Schmutz J."/>
            <person name="Larimer F."/>
            <person name="Land M."/>
            <person name="Hauser L."/>
            <person name="Kyrpides N."/>
            <person name="Ovchinnikova G."/>
            <person name="Zhao F."/>
            <person name="Li T."/>
            <person name="Liu Z."/>
            <person name="Overmann J."/>
            <person name="Bryant D.A."/>
            <person name="Richardson P."/>
        </authorList>
    </citation>
    <scope>NUCLEOTIDE SEQUENCE [LARGE SCALE GENOMIC DNA]</scope>
    <source>
        <strain>DSM 245 / NBRC 103803 / 6330</strain>
    </source>
</reference>